<gene>
    <name type="primary">Eif3l</name>
    <name type="synonym">Eif3eip</name>
    <name type="synonym">Eif3s6ip</name>
    <name type="synonym">Paf67</name>
</gene>
<proteinExistence type="evidence at protein level"/>
<dbReference type="EMBL" id="AJ310346">
    <property type="protein sequence ID" value="CAC84554.1"/>
    <property type="molecule type" value="mRNA"/>
</dbReference>
<dbReference type="EMBL" id="AB066095">
    <property type="protein sequence ID" value="BAB85122.1"/>
    <property type="molecule type" value="Genomic_DNA"/>
</dbReference>
<dbReference type="EMBL" id="AK032936">
    <property type="protein sequence ID" value="BAC28090.1"/>
    <property type="molecule type" value="mRNA"/>
</dbReference>
<dbReference type="EMBL" id="AK075584">
    <property type="protein sequence ID" value="BAC35837.1"/>
    <property type="molecule type" value="mRNA"/>
</dbReference>
<dbReference type="EMBL" id="AK150895">
    <property type="protein sequence ID" value="BAE29941.1"/>
    <property type="molecule type" value="mRNA"/>
</dbReference>
<dbReference type="EMBL" id="AK151175">
    <property type="protein sequence ID" value="BAE30177.1"/>
    <property type="molecule type" value="mRNA"/>
</dbReference>
<dbReference type="EMBL" id="AK167640">
    <property type="protein sequence ID" value="BAE39691.1"/>
    <property type="molecule type" value="mRNA"/>
</dbReference>
<dbReference type="EMBL" id="AK168009">
    <property type="protein sequence ID" value="BAE39996.1"/>
    <property type="molecule type" value="mRNA"/>
</dbReference>
<dbReference type="EMBL" id="AK168295">
    <property type="protein sequence ID" value="BAE40238.1"/>
    <property type="molecule type" value="mRNA"/>
</dbReference>
<dbReference type="EMBL" id="BC024463">
    <property type="protein sequence ID" value="AAH24463.1"/>
    <property type="molecule type" value="mRNA"/>
</dbReference>
<dbReference type="CCDS" id="CCDS27632.1"/>
<dbReference type="RefSeq" id="NP_660121.2">
    <property type="nucleotide sequence ID" value="NM_145139.2"/>
</dbReference>
<dbReference type="SMR" id="Q8QZY1"/>
<dbReference type="BioGRID" id="230176">
    <property type="interactions" value="33"/>
</dbReference>
<dbReference type="FunCoup" id="Q8QZY1">
    <property type="interactions" value="3355"/>
</dbReference>
<dbReference type="IntAct" id="Q8QZY1">
    <property type="interactions" value="5"/>
</dbReference>
<dbReference type="MINT" id="Q8QZY1"/>
<dbReference type="STRING" id="10090.ENSMUSP00000038839"/>
<dbReference type="GlyGen" id="Q8QZY1">
    <property type="glycosylation" value="1 site, 1 O-linked glycan (1 site)"/>
</dbReference>
<dbReference type="iPTMnet" id="Q8QZY1"/>
<dbReference type="MetOSite" id="Q8QZY1"/>
<dbReference type="PhosphoSitePlus" id="Q8QZY1"/>
<dbReference type="SwissPalm" id="Q8QZY1"/>
<dbReference type="jPOST" id="Q8QZY1"/>
<dbReference type="PaxDb" id="10090-ENSMUSP00000038839"/>
<dbReference type="PeptideAtlas" id="Q8QZY1"/>
<dbReference type="ProteomicsDB" id="275655"/>
<dbReference type="Pumba" id="Q8QZY1"/>
<dbReference type="Antibodypedia" id="221">
    <property type="antibodies" value="146 antibodies from 25 providers"/>
</dbReference>
<dbReference type="DNASU" id="223691"/>
<dbReference type="Ensembl" id="ENSMUST00000040518.6">
    <property type="protein sequence ID" value="ENSMUSP00000038839.5"/>
    <property type="gene ID" value="ENSMUSG00000033047.6"/>
</dbReference>
<dbReference type="GeneID" id="223691"/>
<dbReference type="KEGG" id="mmu:223691"/>
<dbReference type="UCSC" id="uc007wsk.1">
    <property type="organism name" value="mouse"/>
</dbReference>
<dbReference type="AGR" id="MGI:2386251"/>
<dbReference type="CTD" id="51386"/>
<dbReference type="MGI" id="MGI:2386251">
    <property type="gene designation" value="Eif3l"/>
</dbReference>
<dbReference type="VEuPathDB" id="HostDB:ENSMUSG00000033047"/>
<dbReference type="eggNOG" id="KOG3677">
    <property type="taxonomic scope" value="Eukaryota"/>
</dbReference>
<dbReference type="GeneTree" id="ENSGT00390000000411"/>
<dbReference type="HOGENOM" id="CLU_029210_0_1_1"/>
<dbReference type="InParanoid" id="Q8QZY1"/>
<dbReference type="OMA" id="AGWFIRN"/>
<dbReference type="OrthoDB" id="15082at2759"/>
<dbReference type="PhylomeDB" id="Q8QZY1"/>
<dbReference type="TreeFam" id="TF101523"/>
<dbReference type="Reactome" id="R-MMU-156827">
    <property type="pathway name" value="L13a-mediated translational silencing of Ceruloplasmin expression"/>
</dbReference>
<dbReference type="Reactome" id="R-MMU-72649">
    <property type="pathway name" value="Translation initiation complex formation"/>
</dbReference>
<dbReference type="Reactome" id="R-MMU-72689">
    <property type="pathway name" value="Formation of a pool of free 40S subunits"/>
</dbReference>
<dbReference type="Reactome" id="R-MMU-72695">
    <property type="pathway name" value="Formation of the ternary complex, and subsequently, the 43S complex"/>
</dbReference>
<dbReference type="Reactome" id="R-MMU-72702">
    <property type="pathway name" value="Ribosomal scanning and start codon recognition"/>
</dbReference>
<dbReference type="Reactome" id="R-MMU-72706">
    <property type="pathway name" value="GTP hydrolysis and joining of the 60S ribosomal subunit"/>
</dbReference>
<dbReference type="BioGRID-ORCS" id="223691">
    <property type="hits" value="13 hits in 77 CRISPR screens"/>
</dbReference>
<dbReference type="ChiTaRS" id="Eif3l">
    <property type="organism name" value="mouse"/>
</dbReference>
<dbReference type="PRO" id="PR:Q8QZY1"/>
<dbReference type="Proteomes" id="UP000000589">
    <property type="component" value="Chromosome 15"/>
</dbReference>
<dbReference type="RNAct" id="Q8QZY1">
    <property type="molecule type" value="protein"/>
</dbReference>
<dbReference type="Bgee" id="ENSMUSG00000033047">
    <property type="expression patterns" value="Expressed in 1st arch mandibular component and 266 other cell types or tissues"/>
</dbReference>
<dbReference type="ExpressionAtlas" id="Q8QZY1">
    <property type="expression patterns" value="baseline and differential"/>
</dbReference>
<dbReference type="GO" id="GO:0016282">
    <property type="term" value="C:eukaryotic 43S preinitiation complex"/>
    <property type="evidence" value="ECO:0007669"/>
    <property type="project" value="UniProtKB-UniRule"/>
</dbReference>
<dbReference type="GO" id="GO:0033290">
    <property type="term" value="C:eukaryotic 48S preinitiation complex"/>
    <property type="evidence" value="ECO:0007669"/>
    <property type="project" value="UniProtKB-UniRule"/>
</dbReference>
<dbReference type="GO" id="GO:0005852">
    <property type="term" value="C:eukaryotic translation initiation factor 3 complex"/>
    <property type="evidence" value="ECO:0000314"/>
    <property type="project" value="UniProtKB"/>
</dbReference>
<dbReference type="GO" id="GO:0001650">
    <property type="term" value="C:fibrillar center"/>
    <property type="evidence" value="ECO:0000314"/>
    <property type="project" value="MGI"/>
</dbReference>
<dbReference type="GO" id="GO:0005730">
    <property type="term" value="C:nucleolus"/>
    <property type="evidence" value="ECO:0000314"/>
    <property type="project" value="MGI"/>
</dbReference>
<dbReference type="GO" id="GO:0005654">
    <property type="term" value="C:nucleoplasm"/>
    <property type="evidence" value="ECO:0000314"/>
    <property type="project" value="MGI"/>
</dbReference>
<dbReference type="GO" id="GO:0045202">
    <property type="term" value="C:synapse"/>
    <property type="evidence" value="ECO:0000314"/>
    <property type="project" value="SynGO"/>
</dbReference>
<dbReference type="GO" id="GO:0003743">
    <property type="term" value="F:translation initiation factor activity"/>
    <property type="evidence" value="ECO:0007669"/>
    <property type="project" value="UniProtKB-UniRule"/>
</dbReference>
<dbReference type="GO" id="GO:0001732">
    <property type="term" value="P:formation of cytoplasmic translation initiation complex"/>
    <property type="evidence" value="ECO:0007669"/>
    <property type="project" value="UniProtKB-UniRule"/>
</dbReference>
<dbReference type="GO" id="GO:0006413">
    <property type="term" value="P:translational initiation"/>
    <property type="evidence" value="ECO:0000314"/>
    <property type="project" value="UniProtKB"/>
</dbReference>
<dbReference type="GO" id="GO:0075525">
    <property type="term" value="P:viral translational termination-reinitiation"/>
    <property type="evidence" value="ECO:0007669"/>
    <property type="project" value="Ensembl"/>
</dbReference>
<dbReference type="HAMAP" id="MF_03011">
    <property type="entry name" value="eIF3l"/>
    <property type="match status" value="1"/>
</dbReference>
<dbReference type="InterPro" id="IPR019382">
    <property type="entry name" value="eIF3l"/>
</dbReference>
<dbReference type="InterPro" id="IPR000717">
    <property type="entry name" value="PCI_dom"/>
</dbReference>
<dbReference type="InterPro" id="IPR011990">
    <property type="entry name" value="TPR-like_helical_dom_sf"/>
</dbReference>
<dbReference type="PANTHER" id="PTHR13242">
    <property type="entry name" value="EUKARYOTIC TRANSLATION INITIATION FACTOR 3"/>
    <property type="match status" value="1"/>
</dbReference>
<dbReference type="PANTHER" id="PTHR13242:SF0">
    <property type="entry name" value="EUKARYOTIC TRANSLATION INITIATION FACTOR 3 SUBUNIT L"/>
    <property type="match status" value="1"/>
</dbReference>
<dbReference type="Pfam" id="PF10255">
    <property type="entry name" value="Paf67"/>
    <property type="match status" value="1"/>
</dbReference>
<dbReference type="SUPFAM" id="SSF48452">
    <property type="entry name" value="TPR-like"/>
    <property type="match status" value="1"/>
</dbReference>
<dbReference type="PROSITE" id="PS50250">
    <property type="entry name" value="PCI"/>
    <property type="match status" value="1"/>
</dbReference>
<evidence type="ECO:0000250" key="1">
    <source>
        <dbReference type="UniProtKB" id="Q9Y262"/>
    </source>
</evidence>
<evidence type="ECO:0000255" key="2">
    <source>
        <dbReference type="HAMAP-Rule" id="MF_03011"/>
    </source>
</evidence>
<evidence type="ECO:0000255" key="3">
    <source>
        <dbReference type="PROSITE-ProRule" id="PRU01185"/>
    </source>
</evidence>
<evidence type="ECO:0000269" key="4">
    <source>
    </source>
</evidence>
<evidence type="ECO:0000269" key="5">
    <source>
    </source>
</evidence>
<evidence type="ECO:0000305" key="6"/>
<evidence type="ECO:0007744" key="7">
    <source>
    </source>
</evidence>
<name>EIF3L_MOUSE</name>
<feature type="initiator methionine" description="Removed" evidence="2">
    <location>
        <position position="1"/>
    </location>
</feature>
<feature type="chain" id="PRO_0000297498" description="Eukaryotic translation initiation factor 3 subunit L">
    <location>
        <begin position="2"/>
        <end position="564"/>
    </location>
</feature>
<feature type="domain" description="PCI" evidence="3">
    <location>
        <begin position="331"/>
        <end position="537"/>
    </location>
</feature>
<feature type="modified residue" description="N-acetylserine" evidence="1 2">
    <location>
        <position position="2"/>
    </location>
</feature>
<feature type="modified residue" description="N6-acetyllysine" evidence="7">
    <location>
        <position position="465"/>
    </location>
</feature>
<feature type="modified residue" description="N6-acetyllysine" evidence="1">
    <location>
        <position position="549"/>
    </location>
</feature>
<feature type="sequence conflict" description="In Ref. 3; BAE39691." evidence="6" ref="3">
    <original>S</original>
    <variation>P</variation>
    <location>
        <position position="149"/>
    </location>
</feature>
<feature type="sequence conflict" description="In Ref. 1; CAC84554." evidence="6" ref="1">
    <original>L</original>
    <variation>F</variation>
    <location>
        <position position="215"/>
    </location>
</feature>
<feature type="sequence conflict" description="In Ref. 3; BAE40238." evidence="6" ref="3">
    <original>P</original>
    <variation>Q</variation>
    <location>
        <position position="253"/>
    </location>
</feature>
<accession>Q8QZY1</accession>
<accession>Q3THF8</accession>
<accession>Q3TJ04</accession>
<accession>Q91YE4</accession>
<organism>
    <name type="scientific">Mus musculus</name>
    <name type="common">Mouse</name>
    <dbReference type="NCBI Taxonomy" id="10090"/>
    <lineage>
        <taxon>Eukaryota</taxon>
        <taxon>Metazoa</taxon>
        <taxon>Chordata</taxon>
        <taxon>Craniata</taxon>
        <taxon>Vertebrata</taxon>
        <taxon>Euteleostomi</taxon>
        <taxon>Mammalia</taxon>
        <taxon>Eutheria</taxon>
        <taxon>Euarchontoglires</taxon>
        <taxon>Glires</taxon>
        <taxon>Rodentia</taxon>
        <taxon>Myomorpha</taxon>
        <taxon>Muroidea</taxon>
        <taxon>Muridae</taxon>
        <taxon>Murinae</taxon>
        <taxon>Mus</taxon>
        <taxon>Mus</taxon>
    </lineage>
</organism>
<reference key="1">
    <citation type="submission" date="2001-04" db="EMBL/GenBank/DDBJ databases">
        <title>Cloning and characterisation of PAF67, a novel protein that is associated with RNA polymerase I.</title>
        <authorList>
            <person name="Seither P."/>
            <person name="Iben S."/>
            <person name="Thiry M."/>
            <person name="Grummt I."/>
        </authorList>
    </citation>
    <scope>NUCLEOTIDE SEQUENCE [MRNA]</scope>
</reference>
<reference key="2">
    <citation type="submission" date="2001-07" db="EMBL/GenBank/DDBJ databases">
        <title>A novel tyrosine-rich heat shock protein (HSP-66Y): molecular cloning and characterization.</title>
        <authorList>
            <person name="Muramatsu H."/>
            <person name="Salama R."/>
            <person name="Zou K."/>
            <person name="Ikematsu S."/>
            <person name="Fan Q."/>
            <person name="Sakuma S."/>
            <person name="Muramatsu T."/>
        </authorList>
    </citation>
    <scope>NUCLEOTIDE SEQUENCE [GENOMIC DNA]</scope>
</reference>
<reference key="3">
    <citation type="journal article" date="2005" name="Science">
        <title>The transcriptional landscape of the mammalian genome.</title>
        <authorList>
            <person name="Carninci P."/>
            <person name="Kasukawa T."/>
            <person name="Katayama S."/>
            <person name="Gough J."/>
            <person name="Frith M.C."/>
            <person name="Maeda N."/>
            <person name="Oyama R."/>
            <person name="Ravasi T."/>
            <person name="Lenhard B."/>
            <person name="Wells C."/>
            <person name="Kodzius R."/>
            <person name="Shimokawa K."/>
            <person name="Bajic V.B."/>
            <person name="Brenner S.E."/>
            <person name="Batalov S."/>
            <person name="Forrest A.R."/>
            <person name="Zavolan M."/>
            <person name="Davis M.J."/>
            <person name="Wilming L.G."/>
            <person name="Aidinis V."/>
            <person name="Allen J.E."/>
            <person name="Ambesi-Impiombato A."/>
            <person name="Apweiler R."/>
            <person name="Aturaliya R.N."/>
            <person name="Bailey T.L."/>
            <person name="Bansal M."/>
            <person name="Baxter L."/>
            <person name="Beisel K.W."/>
            <person name="Bersano T."/>
            <person name="Bono H."/>
            <person name="Chalk A.M."/>
            <person name="Chiu K.P."/>
            <person name="Choudhary V."/>
            <person name="Christoffels A."/>
            <person name="Clutterbuck D.R."/>
            <person name="Crowe M.L."/>
            <person name="Dalla E."/>
            <person name="Dalrymple B.P."/>
            <person name="de Bono B."/>
            <person name="Della Gatta G."/>
            <person name="di Bernardo D."/>
            <person name="Down T."/>
            <person name="Engstrom P."/>
            <person name="Fagiolini M."/>
            <person name="Faulkner G."/>
            <person name="Fletcher C.F."/>
            <person name="Fukushima T."/>
            <person name="Furuno M."/>
            <person name="Futaki S."/>
            <person name="Gariboldi M."/>
            <person name="Georgii-Hemming P."/>
            <person name="Gingeras T.R."/>
            <person name="Gojobori T."/>
            <person name="Green R.E."/>
            <person name="Gustincich S."/>
            <person name="Harbers M."/>
            <person name="Hayashi Y."/>
            <person name="Hensch T.K."/>
            <person name="Hirokawa N."/>
            <person name="Hill D."/>
            <person name="Huminiecki L."/>
            <person name="Iacono M."/>
            <person name="Ikeo K."/>
            <person name="Iwama A."/>
            <person name="Ishikawa T."/>
            <person name="Jakt M."/>
            <person name="Kanapin A."/>
            <person name="Katoh M."/>
            <person name="Kawasawa Y."/>
            <person name="Kelso J."/>
            <person name="Kitamura H."/>
            <person name="Kitano H."/>
            <person name="Kollias G."/>
            <person name="Krishnan S.P."/>
            <person name="Kruger A."/>
            <person name="Kummerfeld S.K."/>
            <person name="Kurochkin I.V."/>
            <person name="Lareau L.F."/>
            <person name="Lazarevic D."/>
            <person name="Lipovich L."/>
            <person name="Liu J."/>
            <person name="Liuni S."/>
            <person name="McWilliam S."/>
            <person name="Madan Babu M."/>
            <person name="Madera M."/>
            <person name="Marchionni L."/>
            <person name="Matsuda H."/>
            <person name="Matsuzawa S."/>
            <person name="Miki H."/>
            <person name="Mignone F."/>
            <person name="Miyake S."/>
            <person name="Morris K."/>
            <person name="Mottagui-Tabar S."/>
            <person name="Mulder N."/>
            <person name="Nakano N."/>
            <person name="Nakauchi H."/>
            <person name="Ng P."/>
            <person name="Nilsson R."/>
            <person name="Nishiguchi S."/>
            <person name="Nishikawa S."/>
            <person name="Nori F."/>
            <person name="Ohara O."/>
            <person name="Okazaki Y."/>
            <person name="Orlando V."/>
            <person name="Pang K.C."/>
            <person name="Pavan W.J."/>
            <person name="Pavesi G."/>
            <person name="Pesole G."/>
            <person name="Petrovsky N."/>
            <person name="Piazza S."/>
            <person name="Reed J."/>
            <person name="Reid J.F."/>
            <person name="Ring B.Z."/>
            <person name="Ringwald M."/>
            <person name="Rost B."/>
            <person name="Ruan Y."/>
            <person name="Salzberg S.L."/>
            <person name="Sandelin A."/>
            <person name="Schneider C."/>
            <person name="Schoenbach C."/>
            <person name="Sekiguchi K."/>
            <person name="Semple C.A."/>
            <person name="Seno S."/>
            <person name="Sessa L."/>
            <person name="Sheng Y."/>
            <person name="Shibata Y."/>
            <person name="Shimada H."/>
            <person name="Shimada K."/>
            <person name="Silva D."/>
            <person name="Sinclair B."/>
            <person name="Sperling S."/>
            <person name="Stupka E."/>
            <person name="Sugiura K."/>
            <person name="Sultana R."/>
            <person name="Takenaka Y."/>
            <person name="Taki K."/>
            <person name="Tammoja K."/>
            <person name="Tan S.L."/>
            <person name="Tang S."/>
            <person name="Taylor M.S."/>
            <person name="Tegner J."/>
            <person name="Teichmann S.A."/>
            <person name="Ueda H.R."/>
            <person name="van Nimwegen E."/>
            <person name="Verardo R."/>
            <person name="Wei C.L."/>
            <person name="Yagi K."/>
            <person name="Yamanishi H."/>
            <person name="Zabarovsky E."/>
            <person name="Zhu S."/>
            <person name="Zimmer A."/>
            <person name="Hide W."/>
            <person name="Bult C."/>
            <person name="Grimmond S.M."/>
            <person name="Teasdale R.D."/>
            <person name="Liu E.T."/>
            <person name="Brusic V."/>
            <person name="Quackenbush J."/>
            <person name="Wahlestedt C."/>
            <person name="Mattick J.S."/>
            <person name="Hume D.A."/>
            <person name="Kai C."/>
            <person name="Sasaki D."/>
            <person name="Tomaru Y."/>
            <person name="Fukuda S."/>
            <person name="Kanamori-Katayama M."/>
            <person name="Suzuki M."/>
            <person name="Aoki J."/>
            <person name="Arakawa T."/>
            <person name="Iida J."/>
            <person name="Imamura K."/>
            <person name="Itoh M."/>
            <person name="Kato T."/>
            <person name="Kawaji H."/>
            <person name="Kawagashira N."/>
            <person name="Kawashima T."/>
            <person name="Kojima M."/>
            <person name="Kondo S."/>
            <person name="Konno H."/>
            <person name="Nakano K."/>
            <person name="Ninomiya N."/>
            <person name="Nishio T."/>
            <person name="Okada M."/>
            <person name="Plessy C."/>
            <person name="Shibata K."/>
            <person name="Shiraki T."/>
            <person name="Suzuki S."/>
            <person name="Tagami M."/>
            <person name="Waki K."/>
            <person name="Watahiki A."/>
            <person name="Okamura-Oho Y."/>
            <person name="Suzuki H."/>
            <person name="Kawai J."/>
            <person name="Hayashizaki Y."/>
        </authorList>
    </citation>
    <scope>NUCLEOTIDE SEQUENCE [LARGE SCALE MRNA]</scope>
    <source>
        <strain>BALB/cJ</strain>
        <strain>C57BL/6J</strain>
        <strain>DBA/2J</strain>
        <tissue>Bone marrow</tissue>
        <tissue>Kidney</tissue>
        <tissue>Liver</tissue>
        <tissue>Wolffian duct</tissue>
    </source>
</reference>
<reference key="4">
    <citation type="journal article" date="2004" name="Genome Res.">
        <title>The status, quality, and expansion of the NIH full-length cDNA project: the Mammalian Gene Collection (MGC).</title>
        <authorList>
            <consortium name="The MGC Project Team"/>
        </authorList>
    </citation>
    <scope>NUCLEOTIDE SEQUENCE [LARGE SCALE MRNA]</scope>
    <source>
        <strain>FVB/N</strain>
        <tissue>Kidney</tissue>
    </source>
</reference>
<reference key="5">
    <citation type="journal article" date="2002" name="EMBO Rep.">
        <title>Multiple interactions between RNA polymerase I, TIF-IA and TAF(I) subunits regulate preinitiation complex assembly at the ribosomal gene promoter.</title>
        <authorList>
            <person name="Yuan X."/>
            <person name="Zhao J."/>
            <person name="Zentgraf H."/>
            <person name="Hoffmann-Rohrer U."/>
            <person name="Grummt I."/>
        </authorList>
    </citation>
    <scope>INTERACTION WITH RRN3</scope>
</reference>
<reference key="6">
    <citation type="journal article" date="2007" name="EMBO J.">
        <title>Reconstitution reveals the functional core of mammalian eIF3.</title>
        <authorList>
            <person name="Masutani M."/>
            <person name="Sonenberg N."/>
            <person name="Yokoyama S."/>
            <person name="Imataka H."/>
        </authorList>
    </citation>
    <scope>FUNCTION</scope>
    <scope>CHARACTERIZATION OF THE EIF-3 COMPLEX</scope>
    <scope>IDENTIFICATION IN THE EIF-3 COMPLEX</scope>
    <scope>IDENTIFICATION BY MASS SPECTROMETRY</scope>
</reference>
<reference key="7">
    <citation type="journal article" date="2010" name="Cell">
        <title>A tissue-specific atlas of mouse protein phosphorylation and expression.</title>
        <authorList>
            <person name="Huttlin E.L."/>
            <person name="Jedrychowski M.P."/>
            <person name="Elias J.E."/>
            <person name="Goswami T."/>
            <person name="Rad R."/>
            <person name="Beausoleil S.A."/>
            <person name="Villen J."/>
            <person name="Haas W."/>
            <person name="Sowa M.E."/>
            <person name="Gygi S.P."/>
        </authorList>
    </citation>
    <scope>IDENTIFICATION BY MASS SPECTROMETRY [LARGE SCALE ANALYSIS]</scope>
    <source>
        <tissue>Brain</tissue>
        <tissue>Brown adipose tissue</tissue>
        <tissue>Heart</tissue>
        <tissue>Kidney</tissue>
        <tissue>Liver</tissue>
        <tissue>Lung</tissue>
        <tissue>Pancreas</tissue>
        <tissue>Spleen</tissue>
        <tissue>Testis</tissue>
    </source>
</reference>
<reference key="8">
    <citation type="journal article" date="2013" name="Mol. Cell">
        <title>SIRT5-mediated lysine desuccinylation impacts diverse metabolic pathways.</title>
        <authorList>
            <person name="Park J."/>
            <person name="Chen Y."/>
            <person name="Tishkoff D.X."/>
            <person name="Peng C."/>
            <person name="Tan M."/>
            <person name="Dai L."/>
            <person name="Xie Z."/>
            <person name="Zhang Y."/>
            <person name="Zwaans B.M."/>
            <person name="Skinner M.E."/>
            <person name="Lombard D.B."/>
            <person name="Zhao Y."/>
        </authorList>
    </citation>
    <scope>ACETYLATION [LARGE SCALE ANALYSIS] AT LYS-465</scope>
    <scope>IDENTIFICATION BY MASS SPECTROMETRY [LARGE SCALE ANALYSIS]</scope>
    <source>
        <tissue>Embryonic fibroblast</tissue>
    </source>
</reference>
<comment type="function">
    <text evidence="2 5">Component of the eukaryotic translation initiation factor 3 (eIF-3) complex, which is required for several steps in the initiation of protein synthesis. The eIF-3 complex associates with the 40S ribosome and facilitates the recruitment of eIF-1, eIF-1A, eIF-2:GTP:methionyl-tRNAi and eIF-5 to form the 43S pre-initiation complex (43S PIC). The eIF-3 complex stimulates mRNA recruitment to the 43S PIC and scanning of the mRNA for AUG recognition. The eIF-3 complex is also required for disassembly and recycling of post-termination ribosomal complexes and subsequently prevents premature joining of the 40S and 60S ribosomal subunits prior to initiation. The eIF-3 complex specifically targets and initiates translation of a subset of mRNAs involved in cell proliferation, including cell cycling, differentiation and apoptosis, and uses different modes of RNA stem-loop binding to exert either translational activation or repression.</text>
</comment>
<comment type="subunit">
    <text evidence="2 4 5">Component of the eukaryotic translation initiation factor 3 (eIF-3) complex, which is composed of 13 subunits: EIF3A, EIF3B, EIF3C, EIF3D, EIF3E, EIF3F, EIF3G, EIF3H, EIF3I, EIF3J, EIF3K, EIF3L and EIF3M. The eIF-3 complex appears to include 3 stable modules: module A is composed of EIF3A, EIF3B, EIF3G and EIF3I; module B is composed of EIF3F, EIF3H, and EIF3M; and module C is composed of EIF3C, EIF3D, EIF3E, EIF3K and EIF3L. EIF3C of module C binds EIF3B of module A and EIF3H of module B, thereby linking the three modules. EIF3J is a labile subunit that binds to the eIF-3 complex via EIF3B. The eIF-3 complex may interact with RPS6KB1 under conditions of nutrient depletion. Mitogenic stimulation may lead to binding and activation of a complex composed of MTOR and RPTOR, leading to phosphorylation and release of RPS6KB1 and binding of EIF4B to eIF-3. Interacts with RRN3.</text>
</comment>
<comment type="subcellular location">
    <subcellularLocation>
        <location evidence="2">Cytoplasm</location>
    </subcellularLocation>
</comment>
<comment type="similarity">
    <text evidence="2">Belongs to the eIF-3 subunit L family.</text>
</comment>
<protein>
    <recommendedName>
        <fullName evidence="2">Eukaryotic translation initiation factor 3 subunit L</fullName>
        <shortName evidence="2">eIF3l</shortName>
    </recommendedName>
    <alternativeName>
        <fullName>66 kDa tyrosine-rich heat shock protein</fullName>
    </alternativeName>
    <alternativeName>
        <fullName>67 kDa polymerase-associated factor</fullName>
    </alternativeName>
    <alternativeName>
        <fullName evidence="2">Eukaryotic translation initiation factor 3 subunit 6-interacting protein</fullName>
    </alternativeName>
    <alternativeName>
        <fullName evidence="2">Eukaryotic translation initiation factor 3 subunit E-interacting protein</fullName>
    </alternativeName>
    <alternativeName>
        <fullName>HSP-66Y</fullName>
    </alternativeName>
    <alternativeName>
        <fullName>PAF67</fullName>
    </alternativeName>
</protein>
<sequence length="564" mass="66613">MSYPADDYESEAAYDPYAYPGDYDMHTGDPKQDLAYERQYEQQTYQVIPEVIKNFIQYFHKTVSDLIDQKVYELQASRVSSDVIDQKVYEIQDIYENSWTKLTERFFKNTPWPEAEAIAPQVGNDAVFLILYKELYYRHIYAKVSGGPSLEQRFESYYNYCNLFNYILNADGPAPLELPNQWLWDIIDEFIYQFQSFSQYRCKTAKKSEGEMDFLRSNPKVWNVHSVLNVLHSLVDKSNINRQLEVYTSGGDPESVAGEYGRHSLYKMLGYFSLVGLLRLHSLLGDYYQAIKVLENIELNKKSMYSRVPECQVTTYYYVGFAYLMMRRYQDAIRVFANILLYIQRTKSMFQRTTYKYEMINKQNEQMHALLAIALTMYPMRIDESIHLQLREKYGDKMLRMQKGDPQVYEELFSYACPKFLSPVVPNYDNVHPNYHKEPFLQQLKVFSDEVQQQAQLSTIRSFLKLYTTMPVAKLAGFLDLTEQEFRIQLLVFKHKMKNLVWTSGISALDGEFQSASEVDFYIDKDMIHIADTKVARRYGDFFIRQIHKFEELNRTLKKMGQRP</sequence>
<keyword id="KW-0007">Acetylation</keyword>
<keyword id="KW-0963">Cytoplasm</keyword>
<keyword id="KW-0396">Initiation factor</keyword>
<keyword id="KW-0648">Protein biosynthesis</keyword>
<keyword id="KW-1185">Reference proteome</keyword>